<dbReference type="EMBL" id="AF001676">
    <property type="protein sequence ID" value="AAC31276.1"/>
    <property type="molecule type" value="Genomic_RNA"/>
</dbReference>
<dbReference type="SMR" id="Q77ZL2"/>
<dbReference type="GO" id="GO:0042025">
    <property type="term" value="C:host cell nucleus"/>
    <property type="evidence" value="ECO:0007669"/>
    <property type="project" value="UniProtKB-SubCell"/>
</dbReference>
<dbReference type="GO" id="GO:0016020">
    <property type="term" value="C:membrane"/>
    <property type="evidence" value="ECO:0007669"/>
    <property type="project" value="UniProtKB-KW"/>
</dbReference>
<dbReference type="GO" id="GO:0055036">
    <property type="term" value="C:virion membrane"/>
    <property type="evidence" value="ECO:0007669"/>
    <property type="project" value="UniProtKB-SubCell"/>
</dbReference>
<dbReference type="GO" id="GO:0003723">
    <property type="term" value="F:RNA binding"/>
    <property type="evidence" value="ECO:0007669"/>
    <property type="project" value="UniProtKB-UniRule"/>
</dbReference>
<dbReference type="GO" id="GO:0039660">
    <property type="term" value="F:structural constituent of virion"/>
    <property type="evidence" value="ECO:0007669"/>
    <property type="project" value="UniProtKB-UniRule"/>
</dbReference>
<dbReference type="GO" id="GO:0046761">
    <property type="term" value="P:viral budding from plasma membrane"/>
    <property type="evidence" value="ECO:0007669"/>
    <property type="project" value="UniProtKB-UniRule"/>
</dbReference>
<dbReference type="FunFam" id="1.10.10.180:FF:000001">
    <property type="entry name" value="Matrix protein 1"/>
    <property type="match status" value="1"/>
</dbReference>
<dbReference type="FunFam" id="1.20.91.10:FF:000001">
    <property type="entry name" value="Matrix protein 1"/>
    <property type="match status" value="1"/>
</dbReference>
<dbReference type="Gene3D" id="1.10.10.180">
    <property type="match status" value="1"/>
</dbReference>
<dbReference type="Gene3D" id="1.20.91.10">
    <property type="match status" value="1"/>
</dbReference>
<dbReference type="HAMAP" id="MF_04068">
    <property type="entry name" value="INFV_M1"/>
    <property type="match status" value="1"/>
</dbReference>
<dbReference type="InterPro" id="IPR036039">
    <property type="entry name" value="Flu_matrix_M1"/>
</dbReference>
<dbReference type="InterPro" id="IPR013188">
    <property type="entry name" value="Flu_matrix_M1_C"/>
</dbReference>
<dbReference type="InterPro" id="IPR001561">
    <property type="entry name" value="Flu_matrix_M1_N"/>
</dbReference>
<dbReference type="InterPro" id="IPR015423">
    <property type="entry name" value="Flu_matrix_M1_N_sub1"/>
</dbReference>
<dbReference type="InterPro" id="IPR015799">
    <property type="entry name" value="Flu_matrix_M1_N_sub2"/>
</dbReference>
<dbReference type="InterPro" id="IPR037533">
    <property type="entry name" value="INFV_M1"/>
</dbReference>
<dbReference type="Pfam" id="PF00598">
    <property type="entry name" value="Flu_M1"/>
    <property type="match status" value="1"/>
</dbReference>
<dbReference type="Pfam" id="PF08289">
    <property type="entry name" value="Flu_M1_C"/>
    <property type="match status" value="1"/>
</dbReference>
<dbReference type="SMART" id="SM00759">
    <property type="entry name" value="Flu_M1_C"/>
    <property type="match status" value="1"/>
</dbReference>
<dbReference type="SUPFAM" id="SSF48145">
    <property type="entry name" value="Influenza virus matrix protein M1"/>
    <property type="match status" value="1"/>
</dbReference>
<gene>
    <name evidence="1" type="primary">M</name>
</gene>
<organism>
    <name type="scientific">Influenza A virus (strain A/Equine/Kentucky/1/1981)</name>
    <dbReference type="NCBI Taxonomy" id="475467"/>
    <lineage>
        <taxon>Viruses</taxon>
        <taxon>Riboviria</taxon>
        <taxon>Orthornavirae</taxon>
        <taxon>Negarnaviricota</taxon>
        <taxon>Polyploviricotina</taxon>
        <taxon>Insthoviricetes</taxon>
        <taxon>Articulavirales</taxon>
        <taxon>Orthomyxoviridae</taxon>
        <taxon>Alphainfluenzavirus</taxon>
        <taxon>Alphainfluenzavirus influenzae</taxon>
        <taxon>Influenza A virus</taxon>
    </lineage>
</organism>
<organismHost>
    <name type="scientific">Aves</name>
    <dbReference type="NCBI Taxonomy" id="8782"/>
</organismHost>
<organismHost>
    <name type="scientific">Equus caballus</name>
    <name type="common">Horse</name>
    <dbReference type="NCBI Taxonomy" id="9796"/>
</organismHost>
<accession>Q77ZL2</accession>
<sequence>MSLLTEVETYVLSIVPSGPLKAEIAQRLEDVFAGKNTDLEALMEWLKTRPILSPLTKGILGFVFTLTVPSERGLQRRRFVQNALSGNGDPNNMDRAVKLYRKLKREITFHGAKEVALSYSTGALASCMGLIYNRMGTVTTEVAFGLVCATCEQIADSQHRSHRQMVTTTNPLIRHENRMVLASTTAKAMEQMAGSSEQAAEAMEVASKARQMVQAMRTIGTHPSSSAGLKDDLLENLQAYQKRMGVQMQRFK</sequence>
<evidence type="ECO:0000255" key="1">
    <source>
        <dbReference type="HAMAP-Rule" id="MF_04068"/>
    </source>
</evidence>
<comment type="function">
    <text evidence="1">Plays critical roles in virus replication, from virus entry and uncoating to assembly and budding of the virus particle. M1 binding to ribonucleocapsids (RNPs) in nucleus seems to inhibit viral transcription. Interaction of viral NEP with M1-RNP is thought to promote nuclear export of the complex, which is targeted to the virion assembly site at the apical plasma membrane in polarized epithelial cells. Interactions with NA and HA may bring M1, a non-raft-associated protein, into lipid rafts. Forms a continuous shell on the inner side of the lipid bilayer in virion, where it binds the RNP. During virus entry into cell, the M2 ion channel acidifies the internal virion core, inducing M1 dissociation from the RNP. M1-free RNPs are transported to the nucleus, where viral transcription and replication can take place.</text>
</comment>
<comment type="function">
    <text evidence="1">Determines the virion's shape: spherical or filamentous. Clinical isolates of influenza are characterized by the presence of significant proportion of filamentous virions, whereas after multiple passage on eggs or cell culture, virions have only spherical morphology. Filamentous virions are thought to be important to infect neighboring cells, and spherical virions more suited to spread through aerosol between hosts organisms.</text>
</comment>
<comment type="subunit">
    <text evidence="1">Homodimer and homomultimer. Interacts with NEP. Binds ribonucleocapsid by both interacting with genomic RNA and NP protein. May interact with HA and NA. Cannot bind NP without genomic RNA.</text>
</comment>
<comment type="subcellular location">
    <subcellularLocation>
        <location evidence="1">Virion membrane</location>
        <topology evidence="1">Peripheral membrane protein</topology>
        <orientation evidence="1">Cytoplasmic side</orientation>
    </subcellularLocation>
    <subcellularLocation>
        <location evidence="1">Host nucleus</location>
    </subcellularLocation>
</comment>
<comment type="alternative products">
    <event type="alternative splicing"/>
    <isoform>
        <id>Q77ZL2-1</id>
        <name>M1</name>
        <sequence type="displayed"/>
    </isoform>
    <isoform>
        <id>Q77ZL3-1</id>
        <name>M2</name>
        <sequence type="external"/>
    </isoform>
    <text>Only the first 9 residues are shared by the 2 isoforms.</text>
</comment>
<comment type="miscellaneous">
    <text evidence="1">Most abundant protein in virion. When expressed alone can form virus-like particles in transfected cells.</text>
</comment>
<comment type="similarity">
    <text evidence="1">Belongs to the influenza viruses Matrix protein M1 family.</text>
</comment>
<feature type="chain" id="PRO_0000326316" description="Matrix protein 1">
    <location>
        <begin position="1"/>
        <end position="252"/>
    </location>
</feature>
<feature type="region of interest" description="Membrane-binding" evidence="1">
    <location>
        <begin position="1"/>
        <end position="164"/>
    </location>
</feature>
<feature type="region of interest" description="RNP-binding" evidence="1">
    <location>
        <begin position="165"/>
        <end position="252"/>
    </location>
</feature>
<feature type="short sequence motif" description="Nuclear localization signal" evidence="1">
    <location>
        <begin position="101"/>
        <end position="105"/>
    </location>
</feature>
<name>M1_I81A2</name>
<proteinExistence type="inferred from homology"/>
<keyword id="KW-0025">Alternative splicing</keyword>
<keyword id="KW-1048">Host nucleus</keyword>
<keyword id="KW-0472">Membrane</keyword>
<keyword id="KW-0694">RNA-binding</keyword>
<keyword id="KW-0468">Viral matrix protein</keyword>
<keyword id="KW-0946">Virion</keyword>
<reference key="1">
    <citation type="journal article" date="1998" name="Arch. Virol.">
        <title>Phylogenetic analyses of the matrix and non-structural genes of equine influenza viruses.</title>
        <authorList>
            <person name="Lindstrom S."/>
            <person name="Endo A."/>
            <person name="Sugita S."/>
            <person name="Pecoraro M."/>
            <person name="Hiromoto Y."/>
            <person name="Kamada M."/>
            <person name="Takahashi T."/>
            <person name="Nerome K."/>
        </authorList>
    </citation>
    <scope>NUCLEOTIDE SEQUENCE [GENOMIC RNA]</scope>
</reference>
<protein>
    <recommendedName>
        <fullName evidence="1">Matrix protein 1</fullName>
        <shortName evidence="1">M1</shortName>
    </recommendedName>
</protein>